<keyword id="KW-1185">Reference proteome</keyword>
<keyword id="KW-0694">RNA-binding</keyword>
<keyword id="KW-0804">Transcription</keyword>
<keyword id="KW-0889">Transcription antitermination</keyword>
<keyword id="KW-0805">Transcription regulation</keyword>
<gene>
    <name evidence="1" type="primary">nusB</name>
    <name type="ordered locus">Spea_1166</name>
</gene>
<accession>A8H1Q6</accession>
<sequence>MKPSERRKARRLAVQAIYSWQLSGNNIADVEHEFLTEQDVAGVDIAYFRELLGGVATKKSQLDELITPFVTRPLDEVDPVEKAIVRIATYELTFRKDVPYKVAINEAIELAKAFGAEDGHKFVNGILDKLVARNK</sequence>
<proteinExistence type="inferred from homology"/>
<dbReference type="EMBL" id="CP000851">
    <property type="protein sequence ID" value="ABV86493.1"/>
    <property type="molecule type" value="Genomic_DNA"/>
</dbReference>
<dbReference type="RefSeq" id="WP_012154421.1">
    <property type="nucleotide sequence ID" value="NC_009901.1"/>
</dbReference>
<dbReference type="SMR" id="A8H1Q6"/>
<dbReference type="STRING" id="398579.Spea_1166"/>
<dbReference type="KEGG" id="spl:Spea_1166"/>
<dbReference type="eggNOG" id="COG0781">
    <property type="taxonomic scope" value="Bacteria"/>
</dbReference>
<dbReference type="HOGENOM" id="CLU_087843_4_1_6"/>
<dbReference type="OrthoDB" id="9789556at2"/>
<dbReference type="Proteomes" id="UP000002608">
    <property type="component" value="Chromosome"/>
</dbReference>
<dbReference type="GO" id="GO:0005829">
    <property type="term" value="C:cytosol"/>
    <property type="evidence" value="ECO:0007669"/>
    <property type="project" value="TreeGrafter"/>
</dbReference>
<dbReference type="GO" id="GO:0003723">
    <property type="term" value="F:RNA binding"/>
    <property type="evidence" value="ECO:0007669"/>
    <property type="project" value="UniProtKB-UniRule"/>
</dbReference>
<dbReference type="GO" id="GO:0006353">
    <property type="term" value="P:DNA-templated transcription termination"/>
    <property type="evidence" value="ECO:0007669"/>
    <property type="project" value="UniProtKB-UniRule"/>
</dbReference>
<dbReference type="GO" id="GO:0031564">
    <property type="term" value="P:transcription antitermination"/>
    <property type="evidence" value="ECO:0007669"/>
    <property type="project" value="UniProtKB-KW"/>
</dbReference>
<dbReference type="CDD" id="cd00619">
    <property type="entry name" value="Terminator_NusB"/>
    <property type="match status" value="1"/>
</dbReference>
<dbReference type="FunFam" id="1.10.940.10:FF:000001">
    <property type="entry name" value="Transcription antitermination factor NusB"/>
    <property type="match status" value="1"/>
</dbReference>
<dbReference type="Gene3D" id="1.10.940.10">
    <property type="entry name" value="NusB-like"/>
    <property type="match status" value="1"/>
</dbReference>
<dbReference type="HAMAP" id="MF_00073">
    <property type="entry name" value="NusB"/>
    <property type="match status" value="1"/>
</dbReference>
<dbReference type="InterPro" id="IPR035926">
    <property type="entry name" value="NusB-like_sf"/>
</dbReference>
<dbReference type="InterPro" id="IPR011605">
    <property type="entry name" value="NusB_fam"/>
</dbReference>
<dbReference type="InterPro" id="IPR006027">
    <property type="entry name" value="NusB_RsmB_TIM44"/>
</dbReference>
<dbReference type="NCBIfam" id="TIGR01951">
    <property type="entry name" value="nusB"/>
    <property type="match status" value="1"/>
</dbReference>
<dbReference type="PANTHER" id="PTHR11078:SF3">
    <property type="entry name" value="ANTITERMINATION NUSB DOMAIN-CONTAINING PROTEIN"/>
    <property type="match status" value="1"/>
</dbReference>
<dbReference type="PANTHER" id="PTHR11078">
    <property type="entry name" value="N UTILIZATION SUBSTANCE PROTEIN B-RELATED"/>
    <property type="match status" value="1"/>
</dbReference>
<dbReference type="Pfam" id="PF01029">
    <property type="entry name" value="NusB"/>
    <property type="match status" value="1"/>
</dbReference>
<dbReference type="SUPFAM" id="SSF48013">
    <property type="entry name" value="NusB-like"/>
    <property type="match status" value="1"/>
</dbReference>
<evidence type="ECO:0000255" key="1">
    <source>
        <dbReference type="HAMAP-Rule" id="MF_00073"/>
    </source>
</evidence>
<protein>
    <recommendedName>
        <fullName evidence="1">Transcription antitermination protein NusB</fullName>
    </recommendedName>
    <alternativeName>
        <fullName evidence="1">Antitermination factor NusB</fullName>
    </alternativeName>
</protein>
<comment type="function">
    <text evidence="1">Involved in transcription antitermination. Required for transcription of ribosomal RNA (rRNA) genes. Binds specifically to the boxA antiterminator sequence of the ribosomal RNA (rrn) operons.</text>
</comment>
<comment type="similarity">
    <text evidence="1">Belongs to the NusB family.</text>
</comment>
<feature type="chain" id="PRO_1000075205" description="Transcription antitermination protein NusB">
    <location>
        <begin position="1"/>
        <end position="135"/>
    </location>
</feature>
<organism>
    <name type="scientific">Shewanella pealeana (strain ATCC 700345 / ANG-SQ1)</name>
    <dbReference type="NCBI Taxonomy" id="398579"/>
    <lineage>
        <taxon>Bacteria</taxon>
        <taxon>Pseudomonadati</taxon>
        <taxon>Pseudomonadota</taxon>
        <taxon>Gammaproteobacteria</taxon>
        <taxon>Alteromonadales</taxon>
        <taxon>Shewanellaceae</taxon>
        <taxon>Shewanella</taxon>
    </lineage>
</organism>
<reference key="1">
    <citation type="submission" date="2007-10" db="EMBL/GenBank/DDBJ databases">
        <title>Complete sequence of Shewanella pealeana ATCC 700345.</title>
        <authorList>
            <consortium name="US DOE Joint Genome Institute"/>
            <person name="Copeland A."/>
            <person name="Lucas S."/>
            <person name="Lapidus A."/>
            <person name="Barry K."/>
            <person name="Glavina del Rio T."/>
            <person name="Dalin E."/>
            <person name="Tice H."/>
            <person name="Pitluck S."/>
            <person name="Chertkov O."/>
            <person name="Brettin T."/>
            <person name="Bruce D."/>
            <person name="Detter J.C."/>
            <person name="Han C."/>
            <person name="Schmutz J."/>
            <person name="Larimer F."/>
            <person name="Land M."/>
            <person name="Hauser L."/>
            <person name="Kyrpides N."/>
            <person name="Kim E."/>
            <person name="Zhao J.-S.Z."/>
            <person name="Manno D."/>
            <person name="Hawari J."/>
            <person name="Richardson P."/>
        </authorList>
    </citation>
    <scope>NUCLEOTIDE SEQUENCE [LARGE SCALE GENOMIC DNA]</scope>
    <source>
        <strain>ATCC 700345 / ANG-SQ1</strain>
    </source>
</reference>
<name>NUSB_SHEPA</name>